<dbReference type="EMBL" id="AL513382">
    <property type="protein sequence ID" value="CAD07928.1"/>
    <property type="molecule type" value="Genomic_DNA"/>
</dbReference>
<dbReference type="EMBL" id="AE014613">
    <property type="protein sequence ID" value="AAO70861.1"/>
    <property type="molecule type" value="Genomic_DNA"/>
</dbReference>
<dbReference type="RefSeq" id="NP_457787.1">
    <property type="nucleotide sequence ID" value="NC_003198.1"/>
</dbReference>
<dbReference type="RefSeq" id="WP_000569786.1">
    <property type="nucleotide sequence ID" value="NZ_WSUR01000033.1"/>
</dbReference>
<dbReference type="SMR" id="P0A2Q5"/>
<dbReference type="STRING" id="220341.gene:17587447"/>
<dbReference type="KEGG" id="stt:t3333"/>
<dbReference type="KEGG" id="sty:STY3595"/>
<dbReference type="PATRIC" id="fig|220341.7.peg.3664"/>
<dbReference type="eggNOG" id="COG0583">
    <property type="taxonomic scope" value="Bacteria"/>
</dbReference>
<dbReference type="HOGENOM" id="CLU_039613_6_0_6"/>
<dbReference type="OMA" id="PGNPCHD"/>
<dbReference type="OrthoDB" id="155872at2"/>
<dbReference type="Proteomes" id="UP000000541">
    <property type="component" value="Chromosome"/>
</dbReference>
<dbReference type="Proteomes" id="UP000002670">
    <property type="component" value="Chromosome"/>
</dbReference>
<dbReference type="GO" id="GO:0005737">
    <property type="term" value="C:cytoplasm"/>
    <property type="evidence" value="ECO:0007669"/>
    <property type="project" value="UniProtKB-SubCell"/>
</dbReference>
<dbReference type="GO" id="GO:0003700">
    <property type="term" value="F:DNA-binding transcription factor activity"/>
    <property type="evidence" value="ECO:0007669"/>
    <property type="project" value="InterPro"/>
</dbReference>
<dbReference type="GO" id="GO:0000976">
    <property type="term" value="F:transcription cis-regulatory region binding"/>
    <property type="evidence" value="ECO:0007669"/>
    <property type="project" value="TreeGrafter"/>
</dbReference>
<dbReference type="GO" id="GO:0009086">
    <property type="term" value="P:methionine biosynthetic process"/>
    <property type="evidence" value="ECO:0007669"/>
    <property type="project" value="UniProtKB-KW"/>
</dbReference>
<dbReference type="CDD" id="cd08441">
    <property type="entry name" value="PBP2_MetR"/>
    <property type="match status" value="1"/>
</dbReference>
<dbReference type="FunFam" id="1.10.10.10:FF:000247">
    <property type="entry name" value="HTH-type transcriptional regulator MetR"/>
    <property type="match status" value="1"/>
</dbReference>
<dbReference type="Gene3D" id="3.40.190.10">
    <property type="entry name" value="Periplasmic binding protein-like II"/>
    <property type="match status" value="2"/>
</dbReference>
<dbReference type="Gene3D" id="1.10.10.10">
    <property type="entry name" value="Winged helix-like DNA-binding domain superfamily/Winged helix DNA-binding domain"/>
    <property type="match status" value="1"/>
</dbReference>
<dbReference type="InterPro" id="IPR005119">
    <property type="entry name" value="LysR_subst-bd"/>
</dbReference>
<dbReference type="InterPro" id="IPR037406">
    <property type="entry name" value="MetR_PBP2"/>
</dbReference>
<dbReference type="InterPro" id="IPR000847">
    <property type="entry name" value="Tscrpt_reg_HTH_LysR"/>
</dbReference>
<dbReference type="InterPro" id="IPR036388">
    <property type="entry name" value="WH-like_DNA-bd_sf"/>
</dbReference>
<dbReference type="InterPro" id="IPR036390">
    <property type="entry name" value="WH_DNA-bd_sf"/>
</dbReference>
<dbReference type="NCBIfam" id="NF011950">
    <property type="entry name" value="PRK15421.1"/>
    <property type="match status" value="1"/>
</dbReference>
<dbReference type="PANTHER" id="PTHR30126">
    <property type="entry name" value="HTH-TYPE TRANSCRIPTIONAL REGULATOR"/>
    <property type="match status" value="1"/>
</dbReference>
<dbReference type="PANTHER" id="PTHR30126:SF25">
    <property type="entry name" value="HTH-TYPE TRANSCRIPTIONAL REGULATOR METR"/>
    <property type="match status" value="1"/>
</dbReference>
<dbReference type="Pfam" id="PF00126">
    <property type="entry name" value="HTH_1"/>
    <property type="match status" value="1"/>
</dbReference>
<dbReference type="Pfam" id="PF03466">
    <property type="entry name" value="LysR_substrate"/>
    <property type="match status" value="1"/>
</dbReference>
<dbReference type="PRINTS" id="PR00039">
    <property type="entry name" value="HTHLYSR"/>
</dbReference>
<dbReference type="SUPFAM" id="SSF53850">
    <property type="entry name" value="Periplasmic binding protein-like II"/>
    <property type="match status" value="1"/>
</dbReference>
<dbReference type="SUPFAM" id="SSF46785">
    <property type="entry name" value="Winged helix' DNA-binding domain"/>
    <property type="match status" value="1"/>
</dbReference>
<dbReference type="PROSITE" id="PS50931">
    <property type="entry name" value="HTH_LYSR"/>
    <property type="match status" value="1"/>
</dbReference>
<reference key="1">
    <citation type="journal article" date="2001" name="Nature">
        <title>Complete genome sequence of a multiple drug resistant Salmonella enterica serovar Typhi CT18.</title>
        <authorList>
            <person name="Parkhill J."/>
            <person name="Dougan G."/>
            <person name="James K.D."/>
            <person name="Thomson N.R."/>
            <person name="Pickard D."/>
            <person name="Wain J."/>
            <person name="Churcher C.M."/>
            <person name="Mungall K.L."/>
            <person name="Bentley S.D."/>
            <person name="Holden M.T.G."/>
            <person name="Sebaihia M."/>
            <person name="Baker S."/>
            <person name="Basham D."/>
            <person name="Brooks K."/>
            <person name="Chillingworth T."/>
            <person name="Connerton P."/>
            <person name="Cronin A."/>
            <person name="Davis P."/>
            <person name="Davies R.M."/>
            <person name="Dowd L."/>
            <person name="White N."/>
            <person name="Farrar J."/>
            <person name="Feltwell T."/>
            <person name="Hamlin N."/>
            <person name="Haque A."/>
            <person name="Hien T.T."/>
            <person name="Holroyd S."/>
            <person name="Jagels K."/>
            <person name="Krogh A."/>
            <person name="Larsen T.S."/>
            <person name="Leather S."/>
            <person name="Moule S."/>
            <person name="O'Gaora P."/>
            <person name="Parry C."/>
            <person name="Quail M.A."/>
            <person name="Rutherford K.M."/>
            <person name="Simmonds M."/>
            <person name="Skelton J."/>
            <person name="Stevens K."/>
            <person name="Whitehead S."/>
            <person name="Barrell B.G."/>
        </authorList>
    </citation>
    <scope>NUCLEOTIDE SEQUENCE [LARGE SCALE GENOMIC DNA]</scope>
    <source>
        <strain>CT18</strain>
    </source>
</reference>
<reference key="2">
    <citation type="journal article" date="2003" name="J. Bacteriol.">
        <title>Comparative genomics of Salmonella enterica serovar Typhi strains Ty2 and CT18.</title>
        <authorList>
            <person name="Deng W."/>
            <person name="Liou S.-R."/>
            <person name="Plunkett G. III"/>
            <person name="Mayhew G.F."/>
            <person name="Rose D.J."/>
            <person name="Burland V."/>
            <person name="Kodoyianni V."/>
            <person name="Schwartz D.C."/>
            <person name="Blattner F.R."/>
        </authorList>
    </citation>
    <scope>NUCLEOTIDE SEQUENCE [LARGE SCALE GENOMIC DNA]</scope>
    <source>
        <strain>ATCC 700931 / Ty2</strain>
    </source>
</reference>
<accession>P0A2Q5</accession>
<accession>P05984</accession>
<accession>Q9L6N2</accession>
<protein>
    <recommendedName>
        <fullName>HTH-type transcriptional regulator MetR</fullName>
    </recommendedName>
</protein>
<organism>
    <name type="scientific">Salmonella typhi</name>
    <dbReference type="NCBI Taxonomy" id="90370"/>
    <lineage>
        <taxon>Bacteria</taxon>
        <taxon>Pseudomonadati</taxon>
        <taxon>Pseudomonadota</taxon>
        <taxon>Gammaproteobacteria</taxon>
        <taxon>Enterobacterales</taxon>
        <taxon>Enterobacteriaceae</taxon>
        <taxon>Salmonella</taxon>
    </lineage>
</organism>
<comment type="function">
    <text evidence="1">Control of the last step in methionine biosynthesis; MetR is a positive activator of the metA, metE and metH genes. It is also a negative regulator of its own expression (By similarity).</text>
</comment>
<comment type="subcellular location">
    <subcellularLocation>
        <location evidence="1">Cytoplasm</location>
    </subcellularLocation>
</comment>
<comment type="similarity">
    <text evidence="3">Belongs to the LysR transcriptional regulatory family.</text>
</comment>
<evidence type="ECO:0000250" key="1"/>
<evidence type="ECO:0000255" key="2">
    <source>
        <dbReference type="PROSITE-ProRule" id="PRU00253"/>
    </source>
</evidence>
<evidence type="ECO:0000305" key="3"/>
<keyword id="KW-0010">Activator</keyword>
<keyword id="KW-0028">Amino-acid biosynthesis</keyword>
<keyword id="KW-0963">Cytoplasm</keyword>
<keyword id="KW-0238">DNA-binding</keyword>
<keyword id="KW-0486">Methionine biosynthesis</keyword>
<keyword id="KW-0678">Repressor</keyword>
<keyword id="KW-0804">Transcription</keyword>
<keyword id="KW-0805">Transcription regulation</keyword>
<name>METR_SALTI</name>
<sequence>MIEIKHLKTLQALRNSGSLAAAAAVLHQTQSALSHQFSDLEQRLGFRLFVRKSQPLRFTPQGEVLLQLANQVLPQISRALQACNEPQQTRLRIAIECHSCIQWLTPALENFRASWPQVEMDFTSGVTFDPQPALQQGELDLVMTSDILPRSGLHYSPMFDFEVRLVLAPDHPLASKTQITPEDLASETLLIYPVQRSRLDVWRHFLQPAGISPLLKSVDNTLLLIQMVAARMGIAALPHWVVESVERQGLVVTKTLGDGLWSRLYAAVRDGDQRQAVTEAFIRSTRDHACDHLPFVRSAERPIFDAPTAKPGSQPRL</sequence>
<feature type="chain" id="PRO_0000105675" description="HTH-type transcriptional regulator MetR">
    <location>
        <begin position="1"/>
        <end position="317"/>
    </location>
</feature>
<feature type="domain" description="HTH lysR-type" evidence="2">
    <location>
        <begin position="1"/>
        <end position="59"/>
    </location>
</feature>
<feature type="DNA-binding region" description="H-T-H motif" evidence="2">
    <location>
        <begin position="19"/>
        <end position="38"/>
    </location>
</feature>
<gene>
    <name type="primary">metR</name>
    <name type="ordered locus">STY3595</name>
    <name type="ordered locus">t3333</name>
</gene>
<proteinExistence type="inferred from homology"/>